<sequence>MLFKQQVWLRQKLLVLGSLAVGSLLYLVARVGSLDRLQPICPVESRFGGAHNQAELPLRALQFKRGLLHEFRKGNSSKEQVHLHDLVQQLPKAIIIGVRKGGTRALLEMLNLHPAVVKASQEIHFFDNDENYAKGIEWYRKKMPFSYPQQITIEKSPAYFITEEVPERIYKMNSSIKLLIIVREPTTRAISDYTQVLEGKERKNKTYYKFEKLAIDPNTCEVNTKYKAVRTSIYTKHLERWLKYFPIEQFHIVDGDRLITEPLPELQLVEKFLNLPPRISQYNLYFNATRGFYCLRFNIIFNKCLAGSKGRIHPEVDPSVITKLRKFFHPFNQKFYQITGRTLNWP</sequence>
<protein>
    <recommendedName>
        <fullName>Heparan sulfate glucosamine 3-O-sulfotransferase 5</fullName>
        <ecNumber>2.8.2.23</ecNumber>
    </recommendedName>
    <alternativeName>
        <fullName>Heparan sulfate D-glucosaminyl 3-O-sulfotransferase 5</fullName>
        <shortName>Heparan sulfate 3-O-sulfotransferase 5</shortName>
    </alternativeName>
</protein>
<reference key="1">
    <citation type="journal article" date="2005" name="Science">
        <title>The transcriptional landscape of the mammalian genome.</title>
        <authorList>
            <person name="Carninci P."/>
            <person name="Kasukawa T."/>
            <person name="Katayama S."/>
            <person name="Gough J."/>
            <person name="Frith M.C."/>
            <person name="Maeda N."/>
            <person name="Oyama R."/>
            <person name="Ravasi T."/>
            <person name="Lenhard B."/>
            <person name="Wells C."/>
            <person name="Kodzius R."/>
            <person name="Shimokawa K."/>
            <person name="Bajic V.B."/>
            <person name="Brenner S.E."/>
            <person name="Batalov S."/>
            <person name="Forrest A.R."/>
            <person name="Zavolan M."/>
            <person name="Davis M.J."/>
            <person name="Wilming L.G."/>
            <person name="Aidinis V."/>
            <person name="Allen J.E."/>
            <person name="Ambesi-Impiombato A."/>
            <person name="Apweiler R."/>
            <person name="Aturaliya R.N."/>
            <person name="Bailey T.L."/>
            <person name="Bansal M."/>
            <person name="Baxter L."/>
            <person name="Beisel K.W."/>
            <person name="Bersano T."/>
            <person name="Bono H."/>
            <person name="Chalk A.M."/>
            <person name="Chiu K.P."/>
            <person name="Choudhary V."/>
            <person name="Christoffels A."/>
            <person name="Clutterbuck D.R."/>
            <person name="Crowe M.L."/>
            <person name="Dalla E."/>
            <person name="Dalrymple B.P."/>
            <person name="de Bono B."/>
            <person name="Della Gatta G."/>
            <person name="di Bernardo D."/>
            <person name="Down T."/>
            <person name="Engstrom P."/>
            <person name="Fagiolini M."/>
            <person name="Faulkner G."/>
            <person name="Fletcher C.F."/>
            <person name="Fukushima T."/>
            <person name="Furuno M."/>
            <person name="Futaki S."/>
            <person name="Gariboldi M."/>
            <person name="Georgii-Hemming P."/>
            <person name="Gingeras T.R."/>
            <person name="Gojobori T."/>
            <person name="Green R.E."/>
            <person name="Gustincich S."/>
            <person name="Harbers M."/>
            <person name="Hayashi Y."/>
            <person name="Hensch T.K."/>
            <person name="Hirokawa N."/>
            <person name="Hill D."/>
            <person name="Huminiecki L."/>
            <person name="Iacono M."/>
            <person name="Ikeo K."/>
            <person name="Iwama A."/>
            <person name="Ishikawa T."/>
            <person name="Jakt M."/>
            <person name="Kanapin A."/>
            <person name="Katoh M."/>
            <person name="Kawasawa Y."/>
            <person name="Kelso J."/>
            <person name="Kitamura H."/>
            <person name="Kitano H."/>
            <person name="Kollias G."/>
            <person name="Krishnan S.P."/>
            <person name="Kruger A."/>
            <person name="Kummerfeld S.K."/>
            <person name="Kurochkin I.V."/>
            <person name="Lareau L.F."/>
            <person name="Lazarevic D."/>
            <person name="Lipovich L."/>
            <person name="Liu J."/>
            <person name="Liuni S."/>
            <person name="McWilliam S."/>
            <person name="Madan Babu M."/>
            <person name="Madera M."/>
            <person name="Marchionni L."/>
            <person name="Matsuda H."/>
            <person name="Matsuzawa S."/>
            <person name="Miki H."/>
            <person name="Mignone F."/>
            <person name="Miyake S."/>
            <person name="Morris K."/>
            <person name="Mottagui-Tabar S."/>
            <person name="Mulder N."/>
            <person name="Nakano N."/>
            <person name="Nakauchi H."/>
            <person name="Ng P."/>
            <person name="Nilsson R."/>
            <person name="Nishiguchi S."/>
            <person name="Nishikawa S."/>
            <person name="Nori F."/>
            <person name="Ohara O."/>
            <person name="Okazaki Y."/>
            <person name="Orlando V."/>
            <person name="Pang K.C."/>
            <person name="Pavan W.J."/>
            <person name="Pavesi G."/>
            <person name="Pesole G."/>
            <person name="Petrovsky N."/>
            <person name="Piazza S."/>
            <person name="Reed J."/>
            <person name="Reid J.F."/>
            <person name="Ring B.Z."/>
            <person name="Ringwald M."/>
            <person name="Rost B."/>
            <person name="Ruan Y."/>
            <person name="Salzberg S.L."/>
            <person name="Sandelin A."/>
            <person name="Schneider C."/>
            <person name="Schoenbach C."/>
            <person name="Sekiguchi K."/>
            <person name="Semple C.A."/>
            <person name="Seno S."/>
            <person name="Sessa L."/>
            <person name="Sheng Y."/>
            <person name="Shibata Y."/>
            <person name="Shimada H."/>
            <person name="Shimada K."/>
            <person name="Silva D."/>
            <person name="Sinclair B."/>
            <person name="Sperling S."/>
            <person name="Stupka E."/>
            <person name="Sugiura K."/>
            <person name="Sultana R."/>
            <person name="Takenaka Y."/>
            <person name="Taki K."/>
            <person name="Tammoja K."/>
            <person name="Tan S.L."/>
            <person name="Tang S."/>
            <person name="Taylor M.S."/>
            <person name="Tegner J."/>
            <person name="Teichmann S.A."/>
            <person name="Ueda H.R."/>
            <person name="van Nimwegen E."/>
            <person name="Verardo R."/>
            <person name="Wei C.L."/>
            <person name="Yagi K."/>
            <person name="Yamanishi H."/>
            <person name="Zabarovsky E."/>
            <person name="Zhu S."/>
            <person name="Zimmer A."/>
            <person name="Hide W."/>
            <person name="Bult C."/>
            <person name="Grimmond S.M."/>
            <person name="Teasdale R.D."/>
            <person name="Liu E.T."/>
            <person name="Brusic V."/>
            <person name="Quackenbush J."/>
            <person name="Wahlestedt C."/>
            <person name="Mattick J.S."/>
            <person name="Hume D.A."/>
            <person name="Kai C."/>
            <person name="Sasaki D."/>
            <person name="Tomaru Y."/>
            <person name="Fukuda S."/>
            <person name="Kanamori-Katayama M."/>
            <person name="Suzuki M."/>
            <person name="Aoki J."/>
            <person name="Arakawa T."/>
            <person name="Iida J."/>
            <person name="Imamura K."/>
            <person name="Itoh M."/>
            <person name="Kato T."/>
            <person name="Kawaji H."/>
            <person name="Kawagashira N."/>
            <person name="Kawashima T."/>
            <person name="Kojima M."/>
            <person name="Kondo S."/>
            <person name="Konno H."/>
            <person name="Nakano K."/>
            <person name="Ninomiya N."/>
            <person name="Nishio T."/>
            <person name="Okada M."/>
            <person name="Plessy C."/>
            <person name="Shibata K."/>
            <person name="Shiraki T."/>
            <person name="Suzuki S."/>
            <person name="Tagami M."/>
            <person name="Waki K."/>
            <person name="Watahiki A."/>
            <person name="Okamura-Oho Y."/>
            <person name="Suzuki H."/>
            <person name="Kawai J."/>
            <person name="Hayashizaki Y."/>
        </authorList>
    </citation>
    <scope>NUCLEOTIDE SEQUENCE [LARGE SCALE MRNA]</scope>
</reference>
<organism>
    <name type="scientific">Mus musculus</name>
    <name type="common">Mouse</name>
    <dbReference type="NCBI Taxonomy" id="10090"/>
    <lineage>
        <taxon>Eukaryota</taxon>
        <taxon>Metazoa</taxon>
        <taxon>Chordata</taxon>
        <taxon>Craniata</taxon>
        <taxon>Vertebrata</taxon>
        <taxon>Euteleostomi</taxon>
        <taxon>Mammalia</taxon>
        <taxon>Eutheria</taxon>
        <taxon>Euarchontoglires</taxon>
        <taxon>Glires</taxon>
        <taxon>Rodentia</taxon>
        <taxon>Myomorpha</taxon>
        <taxon>Muroidea</taxon>
        <taxon>Muridae</taxon>
        <taxon>Murinae</taxon>
        <taxon>Mus</taxon>
        <taxon>Mus</taxon>
    </lineage>
</organism>
<gene>
    <name type="primary">Hs3st5</name>
    <name type="synonym">Hs3ost5</name>
</gene>
<keyword id="KW-1015">Disulfide bond</keyword>
<keyword id="KW-0325">Glycoprotein</keyword>
<keyword id="KW-0333">Golgi apparatus</keyword>
<keyword id="KW-0472">Membrane</keyword>
<keyword id="KW-1185">Reference proteome</keyword>
<keyword id="KW-0735">Signal-anchor</keyword>
<keyword id="KW-0808">Transferase</keyword>
<keyword id="KW-0812">Transmembrane</keyword>
<keyword id="KW-1133">Transmembrane helix</keyword>
<proteinExistence type="evidence at transcript level"/>
<dbReference type="EC" id="2.8.2.23"/>
<dbReference type="EMBL" id="AK031910">
    <property type="protein sequence ID" value="BAC27601.1"/>
    <property type="molecule type" value="mRNA"/>
</dbReference>
<dbReference type="CCDS" id="CCDS35881.1"/>
<dbReference type="RefSeq" id="NP_001074677.1">
    <property type="nucleotide sequence ID" value="NM_001081208.2"/>
</dbReference>
<dbReference type="RefSeq" id="NP_001240284.1">
    <property type="nucleotide sequence ID" value="NM_001253355.1"/>
</dbReference>
<dbReference type="RefSeq" id="NP_001240285.1">
    <property type="nucleotide sequence ID" value="NM_001253356.1"/>
</dbReference>
<dbReference type="RefSeq" id="XP_006512824.1">
    <property type="nucleotide sequence ID" value="XM_006512761.4"/>
</dbReference>
<dbReference type="RefSeq" id="XP_030100975.1">
    <property type="nucleotide sequence ID" value="XM_030245115.2"/>
</dbReference>
<dbReference type="RefSeq" id="XP_036011701.1">
    <property type="nucleotide sequence ID" value="XM_036155808.1"/>
</dbReference>
<dbReference type="SMR" id="Q8BSL4"/>
<dbReference type="FunCoup" id="Q8BSL4">
    <property type="interactions" value="194"/>
</dbReference>
<dbReference type="STRING" id="10090.ENSMUSP00000060229"/>
<dbReference type="GlyCosmos" id="Q8BSL4">
    <property type="glycosylation" value="4 sites, No reported glycans"/>
</dbReference>
<dbReference type="GlyGen" id="Q8BSL4">
    <property type="glycosylation" value="4 sites"/>
</dbReference>
<dbReference type="iPTMnet" id="Q8BSL4"/>
<dbReference type="PhosphoSitePlus" id="Q8BSL4"/>
<dbReference type="PaxDb" id="10090-ENSMUSP00000060229"/>
<dbReference type="Antibodypedia" id="50950">
    <property type="antibodies" value="35 antibodies from 14 providers"/>
</dbReference>
<dbReference type="Ensembl" id="ENSMUST00000058738.11">
    <property type="protein sequence ID" value="ENSMUSP00000060229.5"/>
    <property type="gene ID" value="ENSMUSG00000044499.12"/>
</dbReference>
<dbReference type="Ensembl" id="ENSMUST00000167191.8">
    <property type="protein sequence ID" value="ENSMUSP00000130778.2"/>
    <property type="gene ID" value="ENSMUSG00000044499.12"/>
</dbReference>
<dbReference type="Ensembl" id="ENSMUST00000168572.8">
    <property type="protein sequence ID" value="ENSMUSP00000129434.2"/>
    <property type="gene ID" value="ENSMUSG00000044499.12"/>
</dbReference>
<dbReference type="GeneID" id="319415"/>
<dbReference type="KEGG" id="mmu:319415"/>
<dbReference type="UCSC" id="uc007evc.1">
    <property type="organism name" value="mouse"/>
</dbReference>
<dbReference type="AGR" id="MGI:2441996"/>
<dbReference type="CTD" id="222537"/>
<dbReference type="MGI" id="MGI:2441996">
    <property type="gene designation" value="Hs3st5"/>
</dbReference>
<dbReference type="VEuPathDB" id="HostDB:ENSMUSG00000044499"/>
<dbReference type="eggNOG" id="KOG3704">
    <property type="taxonomic scope" value="Eukaryota"/>
</dbReference>
<dbReference type="GeneTree" id="ENSGT00940000158991"/>
<dbReference type="HOGENOM" id="CLU_017703_0_0_1"/>
<dbReference type="InParanoid" id="Q8BSL4"/>
<dbReference type="OMA" id="ISLYHTY"/>
<dbReference type="OrthoDB" id="411451at2759"/>
<dbReference type="PhylomeDB" id="Q8BSL4"/>
<dbReference type="TreeFam" id="TF350755"/>
<dbReference type="Reactome" id="R-MMU-2022928">
    <property type="pathway name" value="HS-GAG biosynthesis"/>
</dbReference>
<dbReference type="BioGRID-ORCS" id="319415">
    <property type="hits" value="1 hit in 76 CRISPR screens"/>
</dbReference>
<dbReference type="ChiTaRS" id="Hs3st5">
    <property type="organism name" value="mouse"/>
</dbReference>
<dbReference type="PRO" id="PR:Q8BSL4"/>
<dbReference type="Proteomes" id="UP000000589">
    <property type="component" value="Chromosome 10"/>
</dbReference>
<dbReference type="RNAct" id="Q8BSL4">
    <property type="molecule type" value="protein"/>
</dbReference>
<dbReference type="Bgee" id="ENSMUSG00000044499">
    <property type="expression patterns" value="Expressed in animal zygote and 92 other cell types or tissues"/>
</dbReference>
<dbReference type="ExpressionAtlas" id="Q8BSL4">
    <property type="expression patterns" value="baseline and differential"/>
</dbReference>
<dbReference type="GO" id="GO:0000139">
    <property type="term" value="C:Golgi membrane"/>
    <property type="evidence" value="ECO:0007669"/>
    <property type="project" value="UniProtKB-SubCell"/>
</dbReference>
<dbReference type="GO" id="GO:0008467">
    <property type="term" value="F:[heparan sulfate]-glucosamine 3-sulfotransferase activity"/>
    <property type="evidence" value="ECO:0000250"/>
    <property type="project" value="UniProtKB"/>
</dbReference>
<dbReference type="GO" id="GO:0015012">
    <property type="term" value="P:heparan sulfate proteoglycan biosynthetic process"/>
    <property type="evidence" value="ECO:0000250"/>
    <property type="project" value="UniProtKB"/>
</dbReference>
<dbReference type="GO" id="GO:0050819">
    <property type="term" value="P:negative regulation of coagulation"/>
    <property type="evidence" value="ECO:0007669"/>
    <property type="project" value="Ensembl"/>
</dbReference>
<dbReference type="GO" id="GO:0046596">
    <property type="term" value="P:regulation of viral entry into host cell"/>
    <property type="evidence" value="ECO:0000250"/>
    <property type="project" value="UniProtKB"/>
</dbReference>
<dbReference type="FunFam" id="3.40.50.300:FF:000603">
    <property type="entry name" value="Sulfotransferase"/>
    <property type="match status" value="1"/>
</dbReference>
<dbReference type="Gene3D" id="3.40.50.300">
    <property type="entry name" value="P-loop containing nucleotide triphosphate hydrolases"/>
    <property type="match status" value="1"/>
</dbReference>
<dbReference type="InterPro" id="IPR037359">
    <property type="entry name" value="NST/OST"/>
</dbReference>
<dbReference type="InterPro" id="IPR027417">
    <property type="entry name" value="P-loop_NTPase"/>
</dbReference>
<dbReference type="InterPro" id="IPR000863">
    <property type="entry name" value="Sulfotransferase_dom"/>
</dbReference>
<dbReference type="PANTHER" id="PTHR10605:SF46">
    <property type="entry name" value="HEPARAN SULFATE GLUCOSAMINE 3-O-SULFOTRANSFERASE 5"/>
    <property type="match status" value="1"/>
</dbReference>
<dbReference type="PANTHER" id="PTHR10605">
    <property type="entry name" value="HEPARAN SULFATE SULFOTRANSFERASE"/>
    <property type="match status" value="1"/>
</dbReference>
<dbReference type="Pfam" id="PF00685">
    <property type="entry name" value="Sulfotransfer_1"/>
    <property type="match status" value="1"/>
</dbReference>
<dbReference type="SUPFAM" id="SSF52540">
    <property type="entry name" value="P-loop containing nucleoside triphosphate hydrolases"/>
    <property type="match status" value="1"/>
</dbReference>
<feature type="chain" id="PRO_0000085223" description="Heparan sulfate glucosamine 3-O-sulfotransferase 5">
    <location>
        <begin position="1"/>
        <end position="346"/>
    </location>
</feature>
<feature type="topological domain" description="Cytoplasmic" evidence="2">
    <location>
        <begin position="1"/>
        <end position="12"/>
    </location>
</feature>
<feature type="transmembrane region" description="Helical; Signal-anchor for type II membrane protein" evidence="2">
    <location>
        <begin position="13"/>
        <end position="32"/>
    </location>
</feature>
<feature type="topological domain" description="Lumenal" evidence="2">
    <location>
        <begin position="33"/>
        <end position="346"/>
    </location>
</feature>
<feature type="binding site" evidence="1">
    <location>
        <begin position="100"/>
        <end position="104"/>
    </location>
    <ligand>
        <name>3'-phosphoadenylyl sulfate</name>
        <dbReference type="ChEBI" id="CHEBI:58339"/>
    </ligand>
</feature>
<feature type="binding site" evidence="1">
    <location>
        <begin position="122"/>
        <end position="128"/>
    </location>
    <ligand>
        <name>substrate</name>
    </ligand>
</feature>
<feature type="binding site" evidence="1">
    <location>
        <begin position="155"/>
        <end position="158"/>
    </location>
    <ligand>
        <name>substrate</name>
    </ligand>
</feature>
<feature type="binding site" evidence="1">
    <location>
        <position position="183"/>
    </location>
    <ligand>
        <name>3'-phosphoadenylyl sulfate</name>
        <dbReference type="ChEBI" id="CHEBI:58339"/>
    </ligand>
</feature>
<feature type="binding site" evidence="1">
    <location>
        <position position="191"/>
    </location>
    <ligand>
        <name>3'-phosphoadenylyl sulfate</name>
        <dbReference type="ChEBI" id="CHEBI:58339"/>
    </ligand>
</feature>
<feature type="binding site" evidence="1">
    <location>
        <begin position="226"/>
        <end position="227"/>
    </location>
    <ligand>
        <name>substrate</name>
    </ligand>
</feature>
<feature type="binding site" evidence="1">
    <location>
        <position position="293"/>
    </location>
    <ligand>
        <name>3'-phosphoadenylyl sulfate</name>
        <dbReference type="ChEBI" id="CHEBI:58339"/>
    </ligand>
</feature>
<feature type="binding site" evidence="1">
    <location>
        <begin position="309"/>
        <end position="313"/>
    </location>
    <ligand>
        <name>3'-phosphoadenylyl sulfate</name>
        <dbReference type="ChEBI" id="CHEBI:58339"/>
    </ligand>
</feature>
<feature type="glycosylation site" description="N-linked (GlcNAc...) asparagine" evidence="2">
    <location>
        <position position="75"/>
    </location>
</feature>
<feature type="glycosylation site" description="N-linked (GlcNAc...) asparagine" evidence="2">
    <location>
        <position position="173"/>
    </location>
</feature>
<feature type="glycosylation site" description="N-linked (GlcNAc...) asparagine" evidence="2">
    <location>
        <position position="204"/>
    </location>
</feature>
<feature type="glycosylation site" description="N-linked (GlcNAc...) asparagine" evidence="2">
    <location>
        <position position="287"/>
    </location>
</feature>
<feature type="disulfide bond" evidence="1">
    <location>
        <begin position="294"/>
        <end position="304"/>
    </location>
</feature>
<accession>Q8BSL4</accession>
<comment type="function">
    <text evidence="1">Sulfotransferase that utilizes 3'-phospho-5'-adenylyl sulfate (PAPS) to catalyze the transfer of a sulfo group to position 3 of glucosamine residues in heparan. Catalyzes the rate limiting step in the biosynthesis of heparan sulfate (HSact). This modification is a crucial step in the biosynthesis of anticoagulant heparan sulfate as it completes the structure of the antithrombin pentasaccharide binding site. Also generates GlcUA-GlcNS or IdoUA-GlcNS and IdoUA2S-GlcNH2 (By similarity).</text>
</comment>
<comment type="catalytic activity">
    <reaction>
        <text>alpha-D-glucosaminyl-[heparan sulfate](n) + 3'-phosphoadenylyl sulfate = 3-sulfo-alpha-D-glucosaminyl-[heparan sulfate](n) + adenosine 3',5'-bisphosphate + H(+)</text>
        <dbReference type="Rhea" id="RHEA:15461"/>
        <dbReference type="Rhea" id="RHEA-COMP:9830"/>
        <dbReference type="Rhea" id="RHEA-COMP:9831"/>
        <dbReference type="ChEBI" id="CHEBI:15378"/>
        <dbReference type="ChEBI" id="CHEBI:58339"/>
        <dbReference type="ChEBI" id="CHEBI:58343"/>
        <dbReference type="ChEBI" id="CHEBI:58388"/>
        <dbReference type="ChEBI" id="CHEBI:70975"/>
        <dbReference type="EC" id="2.8.2.23"/>
    </reaction>
</comment>
<comment type="subcellular location">
    <subcellularLocation>
        <location evidence="3">Golgi apparatus membrane</location>
        <topology evidence="3">Single-pass type II membrane protein</topology>
    </subcellularLocation>
</comment>
<comment type="similarity">
    <text evidence="3">Belongs to the sulfotransferase 1 family.</text>
</comment>
<evidence type="ECO:0000250" key="1"/>
<evidence type="ECO:0000255" key="2"/>
<evidence type="ECO:0000305" key="3"/>
<name>HS3S5_MOUSE</name>